<organism>
    <name type="scientific">Salmonella typhi</name>
    <dbReference type="NCBI Taxonomy" id="90370"/>
    <lineage>
        <taxon>Bacteria</taxon>
        <taxon>Pseudomonadati</taxon>
        <taxon>Pseudomonadota</taxon>
        <taxon>Gammaproteobacteria</taxon>
        <taxon>Enterobacterales</taxon>
        <taxon>Enterobacteriaceae</taxon>
        <taxon>Salmonella</taxon>
    </lineage>
</organism>
<reference key="1">
    <citation type="journal article" date="2001" name="Nature">
        <title>Complete genome sequence of a multiple drug resistant Salmonella enterica serovar Typhi CT18.</title>
        <authorList>
            <person name="Parkhill J."/>
            <person name="Dougan G."/>
            <person name="James K.D."/>
            <person name="Thomson N.R."/>
            <person name="Pickard D."/>
            <person name="Wain J."/>
            <person name="Churcher C.M."/>
            <person name="Mungall K.L."/>
            <person name="Bentley S.D."/>
            <person name="Holden M.T.G."/>
            <person name="Sebaihia M."/>
            <person name="Baker S."/>
            <person name="Basham D."/>
            <person name="Brooks K."/>
            <person name="Chillingworth T."/>
            <person name="Connerton P."/>
            <person name="Cronin A."/>
            <person name="Davis P."/>
            <person name="Davies R.M."/>
            <person name="Dowd L."/>
            <person name="White N."/>
            <person name="Farrar J."/>
            <person name="Feltwell T."/>
            <person name="Hamlin N."/>
            <person name="Haque A."/>
            <person name="Hien T.T."/>
            <person name="Holroyd S."/>
            <person name="Jagels K."/>
            <person name="Krogh A."/>
            <person name="Larsen T.S."/>
            <person name="Leather S."/>
            <person name="Moule S."/>
            <person name="O'Gaora P."/>
            <person name="Parry C."/>
            <person name="Quail M.A."/>
            <person name="Rutherford K.M."/>
            <person name="Simmonds M."/>
            <person name="Skelton J."/>
            <person name="Stevens K."/>
            <person name="Whitehead S."/>
            <person name="Barrell B.G."/>
        </authorList>
    </citation>
    <scope>NUCLEOTIDE SEQUENCE [LARGE SCALE GENOMIC DNA]</scope>
    <source>
        <strain>CT18</strain>
    </source>
</reference>
<reference key="2">
    <citation type="journal article" date="2003" name="J. Bacteriol.">
        <title>Comparative genomics of Salmonella enterica serovar Typhi strains Ty2 and CT18.</title>
        <authorList>
            <person name="Deng W."/>
            <person name="Liou S.-R."/>
            <person name="Plunkett G. III"/>
            <person name="Mayhew G.F."/>
            <person name="Rose D.J."/>
            <person name="Burland V."/>
            <person name="Kodoyianni V."/>
            <person name="Schwartz D.C."/>
            <person name="Blattner F.R."/>
        </authorList>
    </citation>
    <scope>NUCLEOTIDE SEQUENCE [LARGE SCALE GENOMIC DNA]</scope>
    <source>
        <strain>ATCC 700931 / Ty2</strain>
    </source>
</reference>
<accession>Q8XFE7</accession>
<accession>Q7AMN3</accession>
<sequence length="94" mass="10541">MFTINAEVRKEQGKGASRRLRAANKFPAIIYGGSEAPIAIELDHDQVMNMQAKAEFYSEVLTLVVDGKEVKVKAQAVQRHAYKPKLTHIDFVRA</sequence>
<keyword id="KW-0687">Ribonucleoprotein</keyword>
<keyword id="KW-0689">Ribosomal protein</keyword>
<keyword id="KW-0694">RNA-binding</keyword>
<keyword id="KW-0699">rRNA-binding</keyword>
<proteinExistence type="inferred from homology"/>
<feature type="chain" id="PRO_0000181492" description="Large ribosomal subunit protein bL25">
    <location>
        <begin position="1"/>
        <end position="94"/>
    </location>
</feature>
<evidence type="ECO:0000255" key="1">
    <source>
        <dbReference type="HAMAP-Rule" id="MF_01336"/>
    </source>
</evidence>
<evidence type="ECO:0000305" key="2"/>
<dbReference type="EMBL" id="AE014613">
    <property type="protein sequence ID" value="AAO68331.1"/>
    <property type="molecule type" value="Genomic_DNA"/>
</dbReference>
<dbReference type="EMBL" id="AL513382">
    <property type="protein sequence ID" value="CAD02607.1"/>
    <property type="molecule type" value="Genomic_DNA"/>
</dbReference>
<dbReference type="RefSeq" id="NP_456782.1">
    <property type="nucleotide sequence ID" value="NC_003198.1"/>
</dbReference>
<dbReference type="RefSeq" id="WP_000494192.1">
    <property type="nucleotide sequence ID" value="NZ_WSUR01000002.1"/>
</dbReference>
<dbReference type="SMR" id="Q8XFE7"/>
<dbReference type="STRING" id="220341.gene:17586362"/>
<dbReference type="KEGG" id="stt:t0630"/>
<dbReference type="KEGG" id="sty:STY2461"/>
<dbReference type="PATRIC" id="fig|220341.7.peg.2489"/>
<dbReference type="eggNOG" id="COG1825">
    <property type="taxonomic scope" value="Bacteria"/>
</dbReference>
<dbReference type="HOGENOM" id="CLU_137946_0_0_6"/>
<dbReference type="OMA" id="DHDKVWN"/>
<dbReference type="OrthoDB" id="9806411at2"/>
<dbReference type="Proteomes" id="UP000000541">
    <property type="component" value="Chromosome"/>
</dbReference>
<dbReference type="Proteomes" id="UP000002670">
    <property type="component" value="Chromosome"/>
</dbReference>
<dbReference type="GO" id="GO:0022625">
    <property type="term" value="C:cytosolic large ribosomal subunit"/>
    <property type="evidence" value="ECO:0007669"/>
    <property type="project" value="TreeGrafter"/>
</dbReference>
<dbReference type="GO" id="GO:0008097">
    <property type="term" value="F:5S rRNA binding"/>
    <property type="evidence" value="ECO:0007669"/>
    <property type="project" value="InterPro"/>
</dbReference>
<dbReference type="GO" id="GO:0003735">
    <property type="term" value="F:structural constituent of ribosome"/>
    <property type="evidence" value="ECO:0007669"/>
    <property type="project" value="InterPro"/>
</dbReference>
<dbReference type="GO" id="GO:0006412">
    <property type="term" value="P:translation"/>
    <property type="evidence" value="ECO:0007669"/>
    <property type="project" value="UniProtKB-UniRule"/>
</dbReference>
<dbReference type="CDD" id="cd00495">
    <property type="entry name" value="Ribosomal_L25_TL5_CTC"/>
    <property type="match status" value="1"/>
</dbReference>
<dbReference type="FunFam" id="2.40.240.10:FF:000002">
    <property type="entry name" value="50S ribosomal protein L25"/>
    <property type="match status" value="1"/>
</dbReference>
<dbReference type="Gene3D" id="2.40.240.10">
    <property type="entry name" value="Ribosomal Protein L25, Chain P"/>
    <property type="match status" value="1"/>
</dbReference>
<dbReference type="HAMAP" id="MF_01336">
    <property type="entry name" value="Ribosomal_bL25"/>
    <property type="match status" value="1"/>
</dbReference>
<dbReference type="InterPro" id="IPR020056">
    <property type="entry name" value="Rbsml_bL25/Gln-tRNA_synth_N"/>
</dbReference>
<dbReference type="InterPro" id="IPR011035">
    <property type="entry name" value="Ribosomal_bL25/Gln-tRNA_synth"/>
</dbReference>
<dbReference type="InterPro" id="IPR020055">
    <property type="entry name" value="Ribosomal_bL25_short"/>
</dbReference>
<dbReference type="InterPro" id="IPR029751">
    <property type="entry name" value="Ribosomal_L25_dom"/>
</dbReference>
<dbReference type="InterPro" id="IPR020930">
    <property type="entry name" value="Ribosomal_uL5_bac-type"/>
</dbReference>
<dbReference type="NCBIfam" id="NF004612">
    <property type="entry name" value="PRK05943.1"/>
    <property type="match status" value="1"/>
</dbReference>
<dbReference type="PANTHER" id="PTHR33284">
    <property type="entry name" value="RIBOSOMAL PROTEIN L25/GLN-TRNA SYNTHETASE, ANTI-CODON-BINDING DOMAIN-CONTAINING PROTEIN"/>
    <property type="match status" value="1"/>
</dbReference>
<dbReference type="PANTHER" id="PTHR33284:SF1">
    <property type="entry name" value="RIBOSOMAL PROTEIN L25_GLN-TRNA SYNTHETASE, ANTI-CODON-BINDING DOMAIN-CONTAINING PROTEIN"/>
    <property type="match status" value="1"/>
</dbReference>
<dbReference type="Pfam" id="PF01386">
    <property type="entry name" value="Ribosomal_L25p"/>
    <property type="match status" value="1"/>
</dbReference>
<dbReference type="SUPFAM" id="SSF50715">
    <property type="entry name" value="Ribosomal protein L25-like"/>
    <property type="match status" value="1"/>
</dbReference>
<protein>
    <recommendedName>
        <fullName evidence="1">Large ribosomal subunit protein bL25</fullName>
    </recommendedName>
    <alternativeName>
        <fullName evidence="2">50S ribosomal protein L25</fullName>
    </alternativeName>
</protein>
<gene>
    <name evidence="1" type="primary">rplY</name>
    <name type="ordered locus">STY2461</name>
    <name type="ordered locus">t0630</name>
</gene>
<comment type="function">
    <text evidence="1">This is one of the proteins that binds to the 5S RNA in the ribosome where it forms part of the central protuberance.</text>
</comment>
<comment type="subunit">
    <text evidence="1">Part of the 50S ribosomal subunit; part of the 5S rRNA/L5/L18/L25 subcomplex. Contacts the 5S rRNA. Binds to the 5S rRNA independently of L5 and L18.</text>
</comment>
<comment type="similarity">
    <text evidence="1">Belongs to the bacterial ribosomal protein bL25 family.</text>
</comment>
<name>RL25_SALTI</name>